<dbReference type="EMBL" id="AC010442">
    <property type="status" value="NOT_ANNOTATED_CDS"/>
    <property type="molecule type" value="Genomic_DNA"/>
</dbReference>
<dbReference type="EMBL" id="BC014011">
    <property type="protein sequence ID" value="AAH14011.2"/>
    <property type="status" value="ALT_INIT"/>
    <property type="molecule type" value="mRNA"/>
</dbReference>
<dbReference type="EMBL" id="BC029796">
    <property type="protein sequence ID" value="AAH29796.1"/>
    <property type="molecule type" value="mRNA"/>
</dbReference>
<dbReference type="SMR" id="Q8N2X6"/>
<dbReference type="BioGRID" id="125499">
    <property type="interactions" value="7"/>
</dbReference>
<dbReference type="IntAct" id="Q8N2X6">
    <property type="interactions" value="8"/>
</dbReference>
<dbReference type="MINT" id="Q8N2X6"/>
<dbReference type="GlyCosmos" id="Q8N2X6">
    <property type="glycosylation" value="1 site, No reported glycans"/>
</dbReference>
<dbReference type="GlyGen" id="Q8N2X6">
    <property type="glycosylation" value="1 site"/>
</dbReference>
<dbReference type="BioMuta" id="HGNC:25175"/>
<dbReference type="PaxDb" id="9606-ENSP00000386139"/>
<dbReference type="AGR" id="HGNC:25175"/>
<dbReference type="GeneCards" id="EXOC3-AS1"/>
<dbReference type="HGNC" id="HGNC:25175">
    <property type="gene designation" value="EXOC3-AS1"/>
</dbReference>
<dbReference type="neXtProt" id="NX_Q8N2X6"/>
<dbReference type="eggNOG" id="ENOG502TET6">
    <property type="taxonomic scope" value="Eukaryota"/>
</dbReference>
<dbReference type="InParanoid" id="Q8N2X6"/>
<dbReference type="PAN-GO" id="Q8N2X6">
    <property type="GO annotations" value="0 GO annotations based on evolutionary models"/>
</dbReference>
<dbReference type="PathwayCommons" id="Q8N2X6"/>
<dbReference type="SignaLink" id="Q8N2X6"/>
<dbReference type="ChiTaRS" id="EXOC3-AS1">
    <property type="organism name" value="human"/>
</dbReference>
<dbReference type="Pharos" id="Q8N2X6">
    <property type="development level" value="Tdark"/>
</dbReference>
<dbReference type="PRO" id="PR:Q8N2X6"/>
<dbReference type="Proteomes" id="UP000005640">
    <property type="component" value="Unplaced"/>
</dbReference>
<dbReference type="RNAct" id="Q8N2X6">
    <property type="molecule type" value="protein"/>
</dbReference>
<dbReference type="GO" id="GO:0005576">
    <property type="term" value="C:extracellular region"/>
    <property type="evidence" value="ECO:0007669"/>
    <property type="project" value="UniProtKB-SubCell"/>
</dbReference>
<protein>
    <recommendedName>
        <fullName evidence="3">Uncharacterized protein EXOC3-AS1</fullName>
    </recommendedName>
    <alternativeName>
        <fullName evidence="3">EXOC3 antisense RNA 1</fullName>
    </alternativeName>
    <alternativeName>
        <fullName evidence="3">EXOC3 antisense gene protein 1</fullName>
    </alternativeName>
</protein>
<sequence>MPAVFMLASSSALQCGRGVPRFPRTEVGAGHSVNEETKAEKVGNQTSVIPATSRQAALGTSWTQRRTQPLQERSHWHPRGNNASGMGGHRMFPGPLRGPAAQVLENECGSLGRAAEGRS</sequence>
<evidence type="ECO:0000255" key="1"/>
<evidence type="ECO:0000256" key="2">
    <source>
        <dbReference type="SAM" id="MobiDB-lite"/>
    </source>
</evidence>
<evidence type="ECO:0000305" key="3"/>
<evidence type="ECO:0000312" key="4">
    <source>
        <dbReference type="HGNC" id="HGNC:25175"/>
    </source>
</evidence>
<name>EXAS1_HUMAN</name>
<accession>Q8N2X6</accession>
<accession>Q96CR9</accession>
<organism>
    <name type="scientific">Homo sapiens</name>
    <name type="common">Human</name>
    <dbReference type="NCBI Taxonomy" id="9606"/>
    <lineage>
        <taxon>Eukaryota</taxon>
        <taxon>Metazoa</taxon>
        <taxon>Chordata</taxon>
        <taxon>Craniata</taxon>
        <taxon>Vertebrata</taxon>
        <taxon>Euteleostomi</taxon>
        <taxon>Mammalia</taxon>
        <taxon>Eutheria</taxon>
        <taxon>Euarchontoglires</taxon>
        <taxon>Primates</taxon>
        <taxon>Haplorrhini</taxon>
        <taxon>Catarrhini</taxon>
        <taxon>Hominidae</taxon>
        <taxon>Homo</taxon>
    </lineage>
</organism>
<feature type="signal peptide" evidence="1">
    <location>
        <begin position="1"/>
        <end position="18"/>
    </location>
</feature>
<feature type="chain" id="PRO_0000348588" description="Uncharacterized protein EXOC3-AS1">
    <location>
        <begin position="19"/>
        <end position="119"/>
    </location>
</feature>
<feature type="region of interest" description="Disordered" evidence="2">
    <location>
        <begin position="23"/>
        <end position="100"/>
    </location>
</feature>
<feature type="compositionally biased region" description="Polar residues" evidence="2">
    <location>
        <begin position="43"/>
        <end position="71"/>
    </location>
</feature>
<feature type="glycosylation site" description="N-linked (GlcNAc...) asparagine" evidence="1">
    <location>
        <position position="44"/>
    </location>
</feature>
<feature type="sequence variant" id="VAR_046197" description="In dbSNP:rs10035653.">
    <original>P</original>
    <variation>S</variation>
    <location>
        <position position="50"/>
    </location>
</feature>
<feature type="sequence variant" id="VAR_046198" description="In dbSNP:rs10035612.">
    <original>R</original>
    <variation>G</variation>
    <location>
        <position position="118"/>
    </location>
</feature>
<gene>
    <name evidence="4" type="primary">EXOC3-AS1</name>
    <name evidence="4" type="synonym">C5orf55</name>
</gene>
<keyword id="KW-0325">Glycoprotein</keyword>
<keyword id="KW-1185">Reference proteome</keyword>
<keyword id="KW-0964">Secreted</keyword>
<keyword id="KW-0732">Signal</keyword>
<proteinExistence type="evidence at protein level"/>
<reference key="1">
    <citation type="journal article" date="2004" name="Nature">
        <title>The DNA sequence and comparative analysis of human chromosome 5.</title>
        <authorList>
            <person name="Schmutz J."/>
            <person name="Martin J."/>
            <person name="Terry A."/>
            <person name="Couronne O."/>
            <person name="Grimwood J."/>
            <person name="Lowry S."/>
            <person name="Gordon L.A."/>
            <person name="Scott D."/>
            <person name="Xie G."/>
            <person name="Huang W."/>
            <person name="Hellsten U."/>
            <person name="Tran-Gyamfi M."/>
            <person name="She X."/>
            <person name="Prabhakar S."/>
            <person name="Aerts A."/>
            <person name="Altherr M."/>
            <person name="Bajorek E."/>
            <person name="Black S."/>
            <person name="Branscomb E."/>
            <person name="Caoile C."/>
            <person name="Challacombe J.F."/>
            <person name="Chan Y.M."/>
            <person name="Denys M."/>
            <person name="Detter J.C."/>
            <person name="Escobar J."/>
            <person name="Flowers D."/>
            <person name="Fotopulos D."/>
            <person name="Glavina T."/>
            <person name="Gomez M."/>
            <person name="Gonzales E."/>
            <person name="Goodstein D."/>
            <person name="Grigoriev I."/>
            <person name="Groza M."/>
            <person name="Hammon N."/>
            <person name="Hawkins T."/>
            <person name="Haydu L."/>
            <person name="Israni S."/>
            <person name="Jett J."/>
            <person name="Kadner K."/>
            <person name="Kimball H."/>
            <person name="Kobayashi A."/>
            <person name="Lopez F."/>
            <person name="Lou Y."/>
            <person name="Martinez D."/>
            <person name="Medina C."/>
            <person name="Morgan J."/>
            <person name="Nandkeshwar R."/>
            <person name="Noonan J.P."/>
            <person name="Pitluck S."/>
            <person name="Pollard M."/>
            <person name="Predki P."/>
            <person name="Priest J."/>
            <person name="Ramirez L."/>
            <person name="Retterer J."/>
            <person name="Rodriguez A."/>
            <person name="Rogers S."/>
            <person name="Salamov A."/>
            <person name="Salazar A."/>
            <person name="Thayer N."/>
            <person name="Tice H."/>
            <person name="Tsai M."/>
            <person name="Ustaszewska A."/>
            <person name="Vo N."/>
            <person name="Wheeler J."/>
            <person name="Wu K."/>
            <person name="Yang J."/>
            <person name="Dickson M."/>
            <person name="Cheng J.-F."/>
            <person name="Eichler E.E."/>
            <person name="Olsen A."/>
            <person name="Pennacchio L.A."/>
            <person name="Rokhsar D.S."/>
            <person name="Richardson P."/>
            <person name="Lucas S.M."/>
            <person name="Myers R.M."/>
            <person name="Rubin E.M."/>
        </authorList>
    </citation>
    <scope>NUCLEOTIDE SEQUENCE [LARGE SCALE GENOMIC DNA]</scope>
</reference>
<reference key="2">
    <citation type="journal article" date="2004" name="Genome Res.">
        <title>The status, quality, and expansion of the NIH full-length cDNA project: the Mammalian Gene Collection (MGC).</title>
        <authorList>
            <consortium name="The MGC Project Team"/>
        </authorList>
    </citation>
    <scope>NUCLEOTIDE SEQUENCE [LARGE SCALE MRNA]</scope>
    <source>
        <tissue>Colon</tissue>
    </source>
</reference>
<comment type="interaction">
    <interactant intactId="EBI-749333">
        <id>Q8N2X6</id>
    </interactant>
    <interactant intactId="EBI-10171697">
        <id>Q6A162</id>
        <label>KRT40</label>
    </interactant>
    <organismsDiffer>false</organismsDiffer>
    <experiments>3</experiments>
</comment>
<comment type="interaction">
    <interactant intactId="EBI-749333">
        <id>Q8N2X6</id>
    </interactant>
    <interactant intactId="EBI-747107">
        <id>Q8IUQ4</id>
        <label>SIAH1</label>
    </interactant>
    <organismsDiffer>false</organismsDiffer>
    <experiments>3</experiments>
</comment>
<comment type="interaction">
    <interactant intactId="EBI-749333">
        <id>Q8N2X6</id>
    </interactant>
    <interactant intactId="EBI-355744">
        <id>Q12933</id>
        <label>TRAF2</label>
    </interactant>
    <organismsDiffer>false</organismsDiffer>
    <experiments>4</experiments>
</comment>
<comment type="interaction">
    <interactant intactId="EBI-749333">
        <id>Q8N2X6</id>
    </interactant>
    <interactant intactId="EBI-740098">
        <id>P36406</id>
        <label>TRIM23</label>
    </interactant>
    <organismsDiffer>false</organismsDiffer>
    <experiments>3</experiments>
</comment>
<comment type="interaction">
    <interactant intactId="EBI-749333">
        <id>Q8N2X6</id>
    </interactant>
    <interactant intactId="EBI-742327">
        <id>Q15654</id>
        <label>TRIP6</label>
    </interactant>
    <organismsDiffer>false</organismsDiffer>
    <experiments>4</experiments>
</comment>
<comment type="subcellular location">
    <subcellularLocation>
        <location evidence="3">Secreted</location>
    </subcellularLocation>
</comment>
<comment type="sequence caution" evidence="3">
    <conflict type="erroneous initiation">
        <sequence resource="EMBL-CDS" id="AAH14011"/>
    </conflict>
</comment>